<dbReference type="EMBL" id="AE010299">
    <property type="protein sequence ID" value="AAM06947.1"/>
    <property type="molecule type" value="Genomic_DNA"/>
</dbReference>
<dbReference type="RefSeq" id="WP_011023500.1">
    <property type="nucleotide sequence ID" value="NC_003552.1"/>
</dbReference>
<dbReference type="SMR" id="Q8TK33"/>
<dbReference type="FunCoup" id="Q8TK33">
    <property type="interactions" value="78"/>
</dbReference>
<dbReference type="STRING" id="188937.MA_3591"/>
<dbReference type="EnsemblBacteria" id="AAM06947">
    <property type="protein sequence ID" value="AAM06947"/>
    <property type="gene ID" value="MA_3591"/>
</dbReference>
<dbReference type="GeneID" id="1475484"/>
<dbReference type="KEGG" id="mac:MA_3591"/>
<dbReference type="HOGENOM" id="CLU_095686_1_1_2"/>
<dbReference type="InParanoid" id="Q8TK33"/>
<dbReference type="OrthoDB" id="25187at2157"/>
<dbReference type="PhylomeDB" id="Q8TK33"/>
<dbReference type="Proteomes" id="UP000002487">
    <property type="component" value="Chromosome"/>
</dbReference>
<dbReference type="Gene3D" id="3.30.700.20">
    <property type="entry name" value="Hypothetical protein ph0010, domain 1"/>
    <property type="match status" value="1"/>
</dbReference>
<dbReference type="Gene3D" id="3.30.1490.150">
    <property type="entry name" value="Hypothetical protein ph0010, domain 2"/>
    <property type="match status" value="1"/>
</dbReference>
<dbReference type="HAMAP" id="MF_00645">
    <property type="entry name" value="AMMECR1"/>
    <property type="match status" value="1"/>
</dbReference>
<dbReference type="InterPro" id="IPR023473">
    <property type="entry name" value="AMMECR1"/>
</dbReference>
<dbReference type="InterPro" id="IPR036071">
    <property type="entry name" value="AMMECR1_dom_sf"/>
</dbReference>
<dbReference type="InterPro" id="IPR002733">
    <property type="entry name" value="AMMECR1_domain"/>
</dbReference>
<dbReference type="InterPro" id="IPR027485">
    <property type="entry name" value="AMMECR1_N"/>
</dbReference>
<dbReference type="InterPro" id="IPR027623">
    <property type="entry name" value="AmmeMemoSam_A"/>
</dbReference>
<dbReference type="InterPro" id="IPR023472">
    <property type="entry name" value="Uncharacterised_MJ0810"/>
</dbReference>
<dbReference type="NCBIfam" id="TIGR04335">
    <property type="entry name" value="AmmeMemoSam_A"/>
    <property type="match status" value="1"/>
</dbReference>
<dbReference type="NCBIfam" id="NF002000">
    <property type="entry name" value="PRK00801.1"/>
    <property type="match status" value="1"/>
</dbReference>
<dbReference type="NCBIfam" id="TIGR00296">
    <property type="entry name" value="TIGR00296 family protein"/>
    <property type="match status" value="1"/>
</dbReference>
<dbReference type="PANTHER" id="PTHR13016:SF0">
    <property type="entry name" value="AMME SYNDROME CANDIDATE GENE 1 PROTEIN"/>
    <property type="match status" value="1"/>
</dbReference>
<dbReference type="PANTHER" id="PTHR13016">
    <property type="entry name" value="AMMECR1 HOMOLOG"/>
    <property type="match status" value="1"/>
</dbReference>
<dbReference type="Pfam" id="PF01871">
    <property type="entry name" value="AMMECR1"/>
    <property type="match status" value="1"/>
</dbReference>
<dbReference type="SUPFAM" id="SSF143447">
    <property type="entry name" value="AMMECR1-like"/>
    <property type="match status" value="1"/>
</dbReference>
<dbReference type="PROSITE" id="PS51112">
    <property type="entry name" value="AMMECR1"/>
    <property type="match status" value="1"/>
</dbReference>
<protein>
    <recommendedName>
        <fullName evidence="1">Protein MA_3591</fullName>
    </recommendedName>
</protein>
<keyword id="KW-1185">Reference proteome</keyword>
<sequence length="199" mass="21621">MLTETEGRVAVKLARKTIETLLLGGRVPGPRDAGTDLPPVFGENRGVFVTLTEKGMLRGCIGHPYPDSTLEQAIIDSAISAAVRDPRFPPVGGEELESLIVEVTILTQPEKINAPPKELPDKVEIGKHGLIVKQGYCQGLLLPQVAPENEMDSIDFLGHTCMKAGLSPDAWAKGAEVYCFEGQIFKEKEPEGEVIEEKF</sequence>
<evidence type="ECO:0000255" key="1">
    <source>
        <dbReference type="HAMAP-Rule" id="MF_00645"/>
    </source>
</evidence>
<feature type="chain" id="PRO_0000142376" description="Protein MA_3591">
    <location>
        <begin position="1"/>
        <end position="199"/>
    </location>
</feature>
<feature type="domain" description="AMMECR1" evidence="1">
    <location>
        <begin position="5"/>
        <end position="196"/>
    </location>
</feature>
<proteinExistence type="inferred from homology"/>
<gene>
    <name type="ordered locus">MA_3591</name>
</gene>
<reference key="1">
    <citation type="journal article" date="2002" name="Genome Res.">
        <title>The genome of Methanosarcina acetivorans reveals extensive metabolic and physiological diversity.</title>
        <authorList>
            <person name="Galagan J.E."/>
            <person name="Nusbaum C."/>
            <person name="Roy A."/>
            <person name="Endrizzi M.G."/>
            <person name="Macdonald P."/>
            <person name="FitzHugh W."/>
            <person name="Calvo S."/>
            <person name="Engels R."/>
            <person name="Smirnov S."/>
            <person name="Atnoor D."/>
            <person name="Brown A."/>
            <person name="Allen N."/>
            <person name="Naylor J."/>
            <person name="Stange-Thomann N."/>
            <person name="DeArellano K."/>
            <person name="Johnson R."/>
            <person name="Linton L."/>
            <person name="McEwan P."/>
            <person name="McKernan K."/>
            <person name="Talamas J."/>
            <person name="Tirrell A."/>
            <person name="Ye W."/>
            <person name="Zimmer A."/>
            <person name="Barber R.D."/>
            <person name="Cann I."/>
            <person name="Graham D.E."/>
            <person name="Grahame D.A."/>
            <person name="Guss A.M."/>
            <person name="Hedderich R."/>
            <person name="Ingram-Smith C."/>
            <person name="Kuettner H.C."/>
            <person name="Krzycki J.A."/>
            <person name="Leigh J.A."/>
            <person name="Li W."/>
            <person name="Liu J."/>
            <person name="Mukhopadhyay B."/>
            <person name="Reeve J.N."/>
            <person name="Smith K."/>
            <person name="Springer T.A."/>
            <person name="Umayam L.A."/>
            <person name="White O."/>
            <person name="White R.H."/>
            <person name="de Macario E.C."/>
            <person name="Ferry J.G."/>
            <person name="Jarrell K.F."/>
            <person name="Jing H."/>
            <person name="Macario A.J.L."/>
            <person name="Paulsen I.T."/>
            <person name="Pritchett M."/>
            <person name="Sowers K.R."/>
            <person name="Swanson R.V."/>
            <person name="Zinder S.H."/>
            <person name="Lander E."/>
            <person name="Metcalf W.W."/>
            <person name="Birren B."/>
        </authorList>
    </citation>
    <scope>NUCLEOTIDE SEQUENCE [LARGE SCALE GENOMIC DNA]</scope>
    <source>
        <strain>ATCC 35395 / DSM 2834 / JCM 12185 / C2A</strain>
    </source>
</reference>
<accession>Q8TK33</accession>
<organism>
    <name type="scientific">Methanosarcina acetivorans (strain ATCC 35395 / DSM 2834 / JCM 12185 / C2A)</name>
    <dbReference type="NCBI Taxonomy" id="188937"/>
    <lineage>
        <taxon>Archaea</taxon>
        <taxon>Methanobacteriati</taxon>
        <taxon>Methanobacteriota</taxon>
        <taxon>Stenosarchaea group</taxon>
        <taxon>Methanomicrobia</taxon>
        <taxon>Methanosarcinales</taxon>
        <taxon>Methanosarcinaceae</taxon>
        <taxon>Methanosarcina</taxon>
    </lineage>
</organism>
<name>Y3591_METAC</name>